<sequence>MSLKRNIRRLDSIVPTAGREGSDIQFNLYKGRGVAVFTSGGDSQGMNGAVHSVVRMGIYLGCKVCFINEGYQGMVDGGDNIVEASWNSGSDIIQKGGTIIGSARCTDLRQREGRMKAAYNLIEKGITNLVVIGGDGSLIGANQFRKDWPGLVKELVDTKKITPEAAKSYPNIQIVGLVGSIDNDFCGTDMTIGTDSALQRIIESIDAVVATAQSHQRAFVVEVMGRHCGYLALVAALACEADFCFIPEWPPPVNWREILCKKLQEMRAEGQRLNIIVVAEDDDRDGTPISSDLVKDVVAKTLKYDTRVTVLGHVQRGGSPSAFDRLLGCRMGAEAVLALMEMNEESEPCVISIMVTRWYVPLMQCVERTKAVQKAMSEKDWELAVKLRGRSFQRNLETYKLLTKLRTVEKDNLSGGQNFNVAVMNVGAPAGGMNAAVRSFVRMAIVPSLYSLRYEDSFEGLANGAFKKFQWGDVTNWVMHGGSFLGTQKQLPNEKNVPLIAEQLRKHNIQALLLVGGFEAYHSTLILSKNREKYPEFCIPLCVIPCTISNNVPGTSISLGSDTAINEICTMIDKIKQSATGTKRRVFIIETMGGYCGYLATLSALASGADNAYIFEEKFTVEISLRRGSHRCKMAQGVQRYLIVRNEYANKNFTTEFVKQLFAEEGKGEFSTRINILGHAQQGGSPTPFDRNMGTKLAARALEYIITQIKESMVNGVVSTKSPERATLLGLTGRRVVFTPVEELAAETDFDKRLPCDQWWLKLRPLLRILAKHTSIYHTEAMEDTEDYD</sequence>
<evidence type="ECO:0000255" key="1">
    <source>
        <dbReference type="HAMAP-Rule" id="MF_03184"/>
    </source>
</evidence>
<evidence type="ECO:0000269" key="2">
    <source>
    </source>
</evidence>
<organism>
    <name type="scientific">Haemonchus contortus</name>
    <name type="common">Barber pole worm</name>
    <dbReference type="NCBI Taxonomy" id="6289"/>
    <lineage>
        <taxon>Eukaryota</taxon>
        <taxon>Metazoa</taxon>
        <taxon>Ecdysozoa</taxon>
        <taxon>Nematoda</taxon>
        <taxon>Chromadorea</taxon>
        <taxon>Rhabditida</taxon>
        <taxon>Rhabditina</taxon>
        <taxon>Rhabditomorpha</taxon>
        <taxon>Strongyloidea</taxon>
        <taxon>Trichostrongylidae</taxon>
        <taxon>Haemonchus</taxon>
    </lineage>
</organism>
<feature type="chain" id="PRO_0000112032" description="ATP-dependent 6-phosphofructokinase">
    <location>
        <begin position="1"/>
        <end position="789"/>
    </location>
</feature>
<feature type="region of interest" description="N-terminal catalytic PFK domain 1">
    <location>
        <begin position="1"/>
        <end position="404"/>
    </location>
</feature>
<feature type="region of interest" description="Interdomain linker">
    <location>
        <begin position="405"/>
        <end position="419"/>
    </location>
</feature>
<feature type="region of interest" description="C-terminal regulatory PFK domain 2">
    <location>
        <begin position="420"/>
        <end position="789"/>
    </location>
</feature>
<feature type="active site" description="Proton acceptor" evidence="1">
    <location>
        <position position="182"/>
    </location>
</feature>
<feature type="binding site" evidence="1">
    <location>
        <position position="41"/>
    </location>
    <ligand>
        <name>ATP</name>
        <dbReference type="ChEBI" id="CHEBI:30616"/>
    </ligand>
</feature>
<feature type="binding site" evidence="1">
    <location>
        <begin position="104"/>
        <end position="105"/>
    </location>
    <ligand>
        <name>ATP</name>
        <dbReference type="ChEBI" id="CHEBI:30616"/>
    </ligand>
</feature>
<feature type="binding site" evidence="1">
    <location>
        <begin position="134"/>
        <end position="137"/>
    </location>
    <ligand>
        <name>ATP</name>
        <dbReference type="ChEBI" id="CHEBI:30616"/>
    </ligand>
</feature>
<feature type="binding site" evidence="1">
    <location>
        <position position="135"/>
    </location>
    <ligand>
        <name>Mg(2+)</name>
        <dbReference type="ChEBI" id="CHEBI:18420"/>
        <note>catalytic</note>
    </ligand>
</feature>
<feature type="binding site" description="in other chain" evidence="1">
    <location>
        <begin position="180"/>
        <end position="182"/>
    </location>
    <ligand>
        <name>substrate</name>
        <note>ligand shared between dimeric partners</note>
    </ligand>
</feature>
<feature type="binding site" evidence="1">
    <location>
        <position position="217"/>
    </location>
    <ligand>
        <name>substrate</name>
        <note>ligand shared between dimeric partners</note>
    </ligand>
</feature>
<feature type="binding site" description="in other chain" evidence="1">
    <location>
        <begin position="224"/>
        <end position="226"/>
    </location>
    <ligand>
        <name>substrate</name>
        <note>ligand shared between dimeric partners</note>
    </ligand>
</feature>
<feature type="binding site" description="in other chain" evidence="1">
    <location>
        <position position="280"/>
    </location>
    <ligand>
        <name>substrate</name>
        <note>ligand shared between dimeric partners</note>
    </ligand>
</feature>
<feature type="binding site" evidence="1">
    <location>
        <position position="307"/>
    </location>
    <ligand>
        <name>substrate</name>
        <note>ligand shared between dimeric partners</note>
    </ligand>
</feature>
<feature type="binding site" description="in other chain" evidence="1">
    <location>
        <begin position="313"/>
        <end position="316"/>
    </location>
    <ligand>
        <name>substrate</name>
        <note>ligand shared between dimeric partners</note>
    </ligand>
</feature>
<feature type="binding site" description="in other chain" evidence="1">
    <location>
        <position position="489"/>
    </location>
    <ligand>
        <name>beta-D-fructose 2,6-bisphosphate</name>
        <dbReference type="ChEBI" id="CHEBI:58579"/>
        <note>allosteric activator; ligand shared between dimeric partners</note>
    </ligand>
</feature>
<feature type="binding site" description="in other chain" evidence="1">
    <location>
        <begin position="547"/>
        <end position="551"/>
    </location>
    <ligand>
        <name>beta-D-fructose 2,6-bisphosphate</name>
        <dbReference type="ChEBI" id="CHEBI:58579"/>
        <note>allosteric activator; ligand shared between dimeric partners</note>
    </ligand>
</feature>
<feature type="binding site" evidence="1">
    <location>
        <position position="585"/>
    </location>
    <ligand>
        <name>beta-D-fructose 2,6-bisphosphate</name>
        <dbReference type="ChEBI" id="CHEBI:58579"/>
        <note>allosteric activator; ligand shared between dimeric partners</note>
    </ligand>
</feature>
<feature type="binding site" description="in other chain" evidence="1">
    <location>
        <begin position="592"/>
        <end position="594"/>
    </location>
    <ligand>
        <name>beta-D-fructose 2,6-bisphosphate</name>
        <dbReference type="ChEBI" id="CHEBI:58579"/>
        <note>allosteric activator; ligand shared between dimeric partners</note>
    </ligand>
</feature>
<feature type="binding site" description="in other chain" evidence="1">
    <location>
        <position position="647"/>
    </location>
    <ligand>
        <name>beta-D-fructose 2,6-bisphosphate</name>
        <dbReference type="ChEBI" id="CHEBI:58579"/>
        <note>allosteric activator; ligand shared between dimeric partners</note>
    </ligand>
</feature>
<feature type="binding site" evidence="1">
    <location>
        <position position="673"/>
    </location>
    <ligand>
        <name>beta-D-fructose 2,6-bisphosphate</name>
        <dbReference type="ChEBI" id="CHEBI:58579"/>
        <note>allosteric activator; ligand shared between dimeric partners</note>
    </ligand>
</feature>
<feature type="binding site" description="in other chain" evidence="1">
    <location>
        <begin position="679"/>
        <end position="682"/>
    </location>
    <ligand>
        <name>beta-D-fructose 2,6-bisphosphate</name>
        <dbReference type="ChEBI" id="CHEBI:58579"/>
        <note>allosteric activator; ligand shared between dimeric partners</note>
    </ligand>
</feature>
<feature type="binding site" description="in other chain" evidence="1">
    <location>
        <position position="753"/>
    </location>
    <ligand>
        <name>beta-D-fructose 2,6-bisphosphate</name>
        <dbReference type="ChEBI" id="CHEBI:58579"/>
        <note>allosteric activator; ligand shared between dimeric partners</note>
    </ligand>
</feature>
<accession>Q27665</accession>
<name>PFKA_HAECO</name>
<dbReference type="EC" id="2.7.1.11" evidence="1"/>
<dbReference type="EMBL" id="M59805">
    <property type="protein sequence ID" value="AAA29181.1"/>
    <property type="molecule type" value="mRNA"/>
</dbReference>
<dbReference type="PIR" id="A45617">
    <property type="entry name" value="A45617"/>
</dbReference>
<dbReference type="SMR" id="Q27665"/>
<dbReference type="UniPathway" id="UPA00109">
    <property type="reaction ID" value="UER00182"/>
</dbReference>
<dbReference type="Proteomes" id="UP000025227">
    <property type="component" value="Unplaced"/>
</dbReference>
<dbReference type="GO" id="GO:0005945">
    <property type="term" value="C:6-phosphofructokinase complex"/>
    <property type="evidence" value="ECO:0007669"/>
    <property type="project" value="TreeGrafter"/>
</dbReference>
<dbReference type="GO" id="GO:0003872">
    <property type="term" value="F:6-phosphofructokinase activity"/>
    <property type="evidence" value="ECO:0007669"/>
    <property type="project" value="UniProtKB-UniRule"/>
</dbReference>
<dbReference type="GO" id="GO:0016208">
    <property type="term" value="F:AMP binding"/>
    <property type="evidence" value="ECO:0007669"/>
    <property type="project" value="TreeGrafter"/>
</dbReference>
<dbReference type="GO" id="GO:0005524">
    <property type="term" value="F:ATP binding"/>
    <property type="evidence" value="ECO:0007669"/>
    <property type="project" value="UniProtKB-KW"/>
</dbReference>
<dbReference type="GO" id="GO:0070095">
    <property type="term" value="F:fructose-6-phosphate binding"/>
    <property type="evidence" value="ECO:0007669"/>
    <property type="project" value="TreeGrafter"/>
</dbReference>
<dbReference type="GO" id="GO:0042802">
    <property type="term" value="F:identical protein binding"/>
    <property type="evidence" value="ECO:0007669"/>
    <property type="project" value="TreeGrafter"/>
</dbReference>
<dbReference type="GO" id="GO:0046872">
    <property type="term" value="F:metal ion binding"/>
    <property type="evidence" value="ECO:0007669"/>
    <property type="project" value="UniProtKB-KW"/>
</dbReference>
<dbReference type="GO" id="GO:0048029">
    <property type="term" value="F:monosaccharide binding"/>
    <property type="evidence" value="ECO:0007669"/>
    <property type="project" value="TreeGrafter"/>
</dbReference>
<dbReference type="GO" id="GO:0061621">
    <property type="term" value="P:canonical glycolysis"/>
    <property type="evidence" value="ECO:0007669"/>
    <property type="project" value="TreeGrafter"/>
</dbReference>
<dbReference type="GO" id="GO:0030388">
    <property type="term" value="P:fructose 1,6-bisphosphate metabolic process"/>
    <property type="evidence" value="ECO:0007669"/>
    <property type="project" value="TreeGrafter"/>
</dbReference>
<dbReference type="GO" id="GO:0006002">
    <property type="term" value="P:fructose 6-phosphate metabolic process"/>
    <property type="evidence" value="ECO:0007669"/>
    <property type="project" value="InterPro"/>
</dbReference>
<dbReference type="FunFam" id="3.40.50.460:FF:000003">
    <property type="entry name" value="ATP-dependent 6-phosphofructokinase"/>
    <property type="match status" value="1"/>
</dbReference>
<dbReference type="FunFam" id="3.40.50.460:FF:000008">
    <property type="entry name" value="ATP-dependent 6-phosphofructokinase"/>
    <property type="match status" value="1"/>
</dbReference>
<dbReference type="FunFam" id="3.40.50.450:FF:000043">
    <property type="entry name" value="ATP-dependent 6-phosphofructokinase, platelet type"/>
    <property type="match status" value="1"/>
</dbReference>
<dbReference type="Gene3D" id="3.40.50.450">
    <property type="match status" value="2"/>
</dbReference>
<dbReference type="Gene3D" id="3.40.50.460">
    <property type="entry name" value="Phosphofructokinase domain"/>
    <property type="match status" value="2"/>
</dbReference>
<dbReference type="HAMAP" id="MF_03184">
    <property type="entry name" value="Phosphofructokinase_I_E"/>
    <property type="match status" value="1"/>
</dbReference>
<dbReference type="InterPro" id="IPR009161">
    <property type="entry name" value="6-Pfructokinase_euk"/>
</dbReference>
<dbReference type="InterPro" id="IPR022953">
    <property type="entry name" value="ATP_PFK"/>
</dbReference>
<dbReference type="InterPro" id="IPR015912">
    <property type="entry name" value="Phosphofructokinase_CS"/>
</dbReference>
<dbReference type="InterPro" id="IPR000023">
    <property type="entry name" value="Phosphofructokinase_dom"/>
</dbReference>
<dbReference type="InterPro" id="IPR035966">
    <property type="entry name" value="PKF_sf"/>
</dbReference>
<dbReference type="NCBIfam" id="TIGR02478">
    <property type="entry name" value="6PF1K_euk"/>
    <property type="match status" value="1"/>
</dbReference>
<dbReference type="PANTHER" id="PTHR13697:SF4">
    <property type="entry name" value="ATP-DEPENDENT 6-PHOSPHOFRUCTOKINASE"/>
    <property type="match status" value="1"/>
</dbReference>
<dbReference type="PANTHER" id="PTHR13697">
    <property type="entry name" value="PHOSPHOFRUCTOKINASE"/>
    <property type="match status" value="1"/>
</dbReference>
<dbReference type="Pfam" id="PF00365">
    <property type="entry name" value="PFK"/>
    <property type="match status" value="2"/>
</dbReference>
<dbReference type="PIRSF" id="PIRSF000533">
    <property type="entry name" value="ATP_PFK_euk"/>
    <property type="match status" value="1"/>
</dbReference>
<dbReference type="PRINTS" id="PR00476">
    <property type="entry name" value="PHFRCTKINASE"/>
</dbReference>
<dbReference type="SUPFAM" id="SSF53784">
    <property type="entry name" value="Phosphofructokinase"/>
    <property type="match status" value="2"/>
</dbReference>
<dbReference type="PROSITE" id="PS00433">
    <property type="entry name" value="PHOSPHOFRUCTOKINASE"/>
    <property type="match status" value="2"/>
</dbReference>
<proteinExistence type="evidence at transcript level"/>
<reference key="1">
    <citation type="journal article" date="1991" name="Mol. Biochem. Parasitol.">
        <title>Cloning of a cDNA encoding phosphofructokinase from Haemonchus contortus.</title>
        <authorList>
            <person name="Klein R.D."/>
            <person name="Faureau M.A."/>
            <person name="Winterrowd C.A."/>
            <person name="Hatzenbuhler N.T."/>
            <person name="Shea M.H."/>
            <person name="Nulf S.C."/>
            <person name="Geary T.G."/>
            <person name="Olson E.R."/>
        </authorList>
    </citation>
    <scope>NUCLEOTIDE SEQUENCE [MRNA]</scope>
    <scope>FUNCTION</scope>
</reference>
<gene>
    <name type="primary">PFK</name>
</gene>
<keyword id="KW-0021">Allosteric enzyme</keyword>
<keyword id="KW-0067">ATP-binding</keyword>
<keyword id="KW-0963">Cytoplasm</keyword>
<keyword id="KW-0324">Glycolysis</keyword>
<keyword id="KW-0418">Kinase</keyword>
<keyword id="KW-0460">Magnesium</keyword>
<keyword id="KW-0479">Metal-binding</keyword>
<keyword id="KW-0547">Nucleotide-binding</keyword>
<keyword id="KW-0808">Transferase</keyword>
<protein>
    <recommendedName>
        <fullName evidence="1">ATP-dependent 6-phosphofructokinase</fullName>
        <shortName evidence="1">ATP-PFK</shortName>
        <shortName evidence="1">Phosphofructokinase</shortName>
        <ecNumber evidence="1">2.7.1.11</ecNumber>
    </recommendedName>
    <alternativeName>
        <fullName evidence="1">Phosphohexokinase</fullName>
    </alternativeName>
</protein>
<comment type="function">
    <text evidence="1 2">Catalyzes the phosphorylation of D-fructose 6-phosphate to fructose 1,6-bisphosphate by ATP, the first committing step of glycolysis.</text>
</comment>
<comment type="catalytic activity">
    <reaction evidence="1">
        <text>beta-D-fructose 6-phosphate + ATP = beta-D-fructose 1,6-bisphosphate + ADP + H(+)</text>
        <dbReference type="Rhea" id="RHEA:16109"/>
        <dbReference type="ChEBI" id="CHEBI:15378"/>
        <dbReference type="ChEBI" id="CHEBI:30616"/>
        <dbReference type="ChEBI" id="CHEBI:32966"/>
        <dbReference type="ChEBI" id="CHEBI:57634"/>
        <dbReference type="ChEBI" id="CHEBI:456216"/>
        <dbReference type="EC" id="2.7.1.11"/>
    </reaction>
</comment>
<comment type="cofactor">
    <cofactor evidence="1">
        <name>Mg(2+)</name>
        <dbReference type="ChEBI" id="CHEBI:18420"/>
    </cofactor>
</comment>
<comment type="activity regulation">
    <text evidence="1">Allosterically activated by ADP, AMP, or fructose 2,6-bisphosphate, and allosterically inhibited by ATP or citrate.</text>
</comment>
<comment type="pathway">
    <text evidence="1">Carbohydrate degradation; glycolysis; D-glyceraldehyde 3-phosphate and glycerone phosphate from D-glucose: step 3/4.</text>
</comment>
<comment type="subunit">
    <text evidence="1">Homotetramer.</text>
</comment>
<comment type="subcellular location">
    <subcellularLocation>
        <location evidence="1">Cytoplasm</location>
    </subcellularLocation>
</comment>
<comment type="similarity">
    <text evidence="1">Belongs to the phosphofructokinase type A (PFKA) family. ATP-dependent PFK group I subfamily. Eukaryotic two domain clade 'E' sub-subfamily.</text>
</comment>